<reference key="1">
    <citation type="journal article" date="2004" name="Genome Res.">
        <title>The status, quality, and expansion of the NIH full-length cDNA project: the Mammalian Gene Collection (MGC).</title>
        <authorList>
            <consortium name="The MGC Project Team"/>
        </authorList>
    </citation>
    <scope>NUCLEOTIDE SEQUENCE [LARGE SCALE MRNA]</scope>
    <source>
        <tissue>Testis</tissue>
    </source>
</reference>
<reference key="2">
    <citation type="journal article" date="2012" name="Nat. Commun.">
        <title>Quantitative maps of protein phosphorylation sites across 14 different rat organs and tissues.</title>
        <authorList>
            <person name="Lundby A."/>
            <person name="Secher A."/>
            <person name="Lage K."/>
            <person name="Nordsborg N.B."/>
            <person name="Dmytriyev A."/>
            <person name="Lundby C."/>
            <person name="Olsen J.V."/>
        </authorList>
    </citation>
    <scope>PHOSPHORYLATION [LARGE SCALE ANALYSIS] AT SER-180</scope>
    <scope>IDENTIFICATION BY MASS SPECTROMETRY [LARGE SCALE ANALYSIS]</scope>
</reference>
<accession>Q5XIN1</accession>
<keyword id="KW-0479">Metal-binding</keyword>
<keyword id="KW-0539">Nucleus</keyword>
<keyword id="KW-0597">Phosphoprotein</keyword>
<keyword id="KW-1185">Reference proteome</keyword>
<keyword id="KW-0832">Ubl conjugation</keyword>
<keyword id="KW-0862">Zinc</keyword>
<keyword id="KW-0863">Zinc-finger</keyword>
<evidence type="ECO:0000250" key="1"/>
<evidence type="ECO:0000250" key="2">
    <source>
        <dbReference type="UniProtKB" id="O15151"/>
    </source>
</evidence>
<evidence type="ECO:0000255" key="3"/>
<evidence type="ECO:0000255" key="4">
    <source>
        <dbReference type="PROSITE-ProRule" id="PRU00175"/>
    </source>
</evidence>
<evidence type="ECO:0000255" key="5">
    <source>
        <dbReference type="PROSITE-ProRule" id="PRU00322"/>
    </source>
</evidence>
<evidence type="ECO:0000255" key="6">
    <source>
        <dbReference type="PROSITE-ProRule" id="PRU01273"/>
    </source>
</evidence>
<evidence type="ECO:0000256" key="7">
    <source>
        <dbReference type="SAM" id="MobiDB-lite"/>
    </source>
</evidence>
<evidence type="ECO:0000305" key="8"/>
<evidence type="ECO:0007744" key="9">
    <source>
    </source>
</evidence>
<name>MDM4_RAT</name>
<feature type="chain" id="PRO_0000331516" description="Protein Mdm4">
    <location>
        <begin position="1"/>
        <end position="490"/>
    </location>
</feature>
<feature type="domain" description="SWIB/MDM2" evidence="6">
    <location>
        <begin position="26"/>
        <end position="109"/>
    </location>
</feature>
<feature type="zinc finger region" description="RanBP2-type" evidence="5">
    <location>
        <begin position="300"/>
        <end position="329"/>
    </location>
</feature>
<feature type="zinc finger region" description="RING-type; degenerate" evidence="4">
    <location>
        <begin position="437"/>
        <end position="478"/>
    </location>
</feature>
<feature type="region of interest" description="Disordered" evidence="7">
    <location>
        <begin position="136"/>
        <end position="162"/>
    </location>
</feature>
<feature type="region of interest" description="Disordered" evidence="7">
    <location>
        <begin position="263"/>
        <end position="294"/>
    </location>
</feature>
<feature type="region of interest" description="Necessary for interaction with USP2" evidence="1">
    <location>
        <begin position="393"/>
        <end position="490"/>
    </location>
</feature>
<feature type="short sequence motif" description="Nuclear localization signal" evidence="3">
    <location>
        <begin position="442"/>
        <end position="445"/>
    </location>
</feature>
<feature type="compositionally biased region" description="Basic and acidic residues" evidence="7">
    <location>
        <begin position="268"/>
        <end position="291"/>
    </location>
</feature>
<feature type="modified residue" description="Phosphoserine" evidence="9">
    <location>
        <position position="180"/>
    </location>
</feature>
<feature type="modified residue" description="Phosphoserine; by CHEK2" evidence="2">
    <location>
        <position position="342"/>
    </location>
</feature>
<feature type="modified residue" description="Phosphoserine; by CHEK1 and CHEK2" evidence="2">
    <location>
        <position position="368"/>
    </location>
</feature>
<dbReference type="EMBL" id="BC083647">
    <property type="protein sequence ID" value="AAH83647.1"/>
    <property type="molecule type" value="mRNA"/>
</dbReference>
<dbReference type="RefSeq" id="NP_001012026.1">
    <property type="nucleotide sequence ID" value="NM_001012026.1"/>
</dbReference>
<dbReference type="SMR" id="Q5XIN1"/>
<dbReference type="FunCoup" id="Q5XIN1">
    <property type="interactions" value="2752"/>
</dbReference>
<dbReference type="STRING" id="10116.ENSRNOP00000012984"/>
<dbReference type="iPTMnet" id="Q5XIN1"/>
<dbReference type="PhosphoSitePlus" id="Q5XIN1"/>
<dbReference type="PaxDb" id="10116-ENSRNOP00000012984"/>
<dbReference type="GeneID" id="304798"/>
<dbReference type="KEGG" id="rno:304798"/>
<dbReference type="UCSC" id="RGD:1309306">
    <property type="organism name" value="rat"/>
</dbReference>
<dbReference type="AGR" id="RGD:1309306"/>
<dbReference type="CTD" id="4194"/>
<dbReference type="RGD" id="1309306">
    <property type="gene designation" value="Mdm4"/>
</dbReference>
<dbReference type="VEuPathDB" id="HostDB:ENSRNOG00000009696"/>
<dbReference type="eggNOG" id="ENOG502QQNV">
    <property type="taxonomic scope" value="Eukaryota"/>
</dbReference>
<dbReference type="HOGENOM" id="CLU_043544_2_0_1"/>
<dbReference type="InParanoid" id="Q5XIN1"/>
<dbReference type="PhylomeDB" id="Q5XIN1"/>
<dbReference type="TreeFam" id="TF105306"/>
<dbReference type="Reactome" id="R-RNO-2559580">
    <property type="pathway name" value="Oxidative Stress Induced Senescence"/>
</dbReference>
<dbReference type="Reactome" id="R-RNO-2559585">
    <property type="pathway name" value="Oncogene Induced Senescence"/>
</dbReference>
<dbReference type="Reactome" id="R-RNO-5689880">
    <property type="pathway name" value="Ub-specific processing proteases"/>
</dbReference>
<dbReference type="Reactome" id="R-RNO-6804756">
    <property type="pathway name" value="Regulation of TP53 Activity through Phosphorylation"/>
</dbReference>
<dbReference type="Reactome" id="R-RNO-6804757">
    <property type="pathway name" value="Regulation of TP53 Degradation"/>
</dbReference>
<dbReference type="Reactome" id="R-RNO-6804760">
    <property type="pathway name" value="Regulation of TP53 Activity through Methylation"/>
</dbReference>
<dbReference type="Reactome" id="R-RNO-69541">
    <property type="pathway name" value="Stabilization of p53"/>
</dbReference>
<dbReference type="PRO" id="PR:Q5XIN1"/>
<dbReference type="Proteomes" id="UP000002494">
    <property type="component" value="Chromosome 13"/>
</dbReference>
<dbReference type="Bgee" id="ENSRNOG00000009696">
    <property type="expression patterns" value="Expressed in testis and 19 other cell types or tissues"/>
</dbReference>
<dbReference type="GO" id="GO:0005634">
    <property type="term" value="C:nucleus"/>
    <property type="evidence" value="ECO:0007669"/>
    <property type="project" value="UniProtKB-SubCell"/>
</dbReference>
<dbReference type="GO" id="GO:0017053">
    <property type="term" value="C:transcription repressor complex"/>
    <property type="evidence" value="ECO:0000266"/>
    <property type="project" value="RGD"/>
</dbReference>
<dbReference type="GO" id="GO:0019899">
    <property type="term" value="F:enzyme binding"/>
    <property type="evidence" value="ECO:0000266"/>
    <property type="project" value="RGD"/>
</dbReference>
<dbReference type="GO" id="GO:0004842">
    <property type="term" value="F:ubiquitin-protein transferase activity"/>
    <property type="evidence" value="ECO:0000318"/>
    <property type="project" value="GO_Central"/>
</dbReference>
<dbReference type="GO" id="GO:0008270">
    <property type="term" value="F:zinc ion binding"/>
    <property type="evidence" value="ECO:0007669"/>
    <property type="project" value="UniProtKB-KW"/>
</dbReference>
<dbReference type="GO" id="GO:0003283">
    <property type="term" value="P:atrial septum development"/>
    <property type="evidence" value="ECO:0000266"/>
    <property type="project" value="RGD"/>
</dbReference>
<dbReference type="GO" id="GO:0003181">
    <property type="term" value="P:atrioventricular valve morphogenesis"/>
    <property type="evidence" value="ECO:0000266"/>
    <property type="project" value="RGD"/>
</dbReference>
<dbReference type="GO" id="GO:0071456">
    <property type="term" value="P:cellular response to hypoxia"/>
    <property type="evidence" value="ECO:0000266"/>
    <property type="project" value="RGD"/>
</dbReference>
<dbReference type="GO" id="GO:0030330">
    <property type="term" value="P:DNA damage response, signal transduction by p53 class mediator"/>
    <property type="evidence" value="ECO:0000266"/>
    <property type="project" value="RGD"/>
</dbReference>
<dbReference type="GO" id="GO:0003203">
    <property type="term" value="P:endocardial cushion morphogenesis"/>
    <property type="evidence" value="ECO:0000266"/>
    <property type="project" value="RGD"/>
</dbReference>
<dbReference type="GO" id="GO:0003170">
    <property type="term" value="P:heart valve development"/>
    <property type="evidence" value="ECO:0000266"/>
    <property type="project" value="RGD"/>
</dbReference>
<dbReference type="GO" id="GO:0045892">
    <property type="term" value="P:negative regulation of DNA-templated transcription"/>
    <property type="evidence" value="ECO:0000266"/>
    <property type="project" value="RGD"/>
</dbReference>
<dbReference type="GO" id="GO:1902254">
    <property type="term" value="P:negative regulation of intrinsic apoptotic signaling pathway by p53 class mediator"/>
    <property type="evidence" value="ECO:0000266"/>
    <property type="project" value="RGD"/>
</dbReference>
<dbReference type="GO" id="GO:0042177">
    <property type="term" value="P:negative regulation of protein catabolic process"/>
    <property type="evidence" value="ECO:0000266"/>
    <property type="project" value="RGD"/>
</dbReference>
<dbReference type="GO" id="GO:0000122">
    <property type="term" value="P:negative regulation of transcription by RNA polymerase II"/>
    <property type="evidence" value="ECO:0000266"/>
    <property type="project" value="RGD"/>
</dbReference>
<dbReference type="GO" id="GO:0008284">
    <property type="term" value="P:positive regulation of cell population proliferation"/>
    <property type="evidence" value="ECO:0000266"/>
    <property type="project" value="RGD"/>
</dbReference>
<dbReference type="GO" id="GO:0050821">
    <property type="term" value="P:protein stabilization"/>
    <property type="evidence" value="ECO:0000266"/>
    <property type="project" value="RGD"/>
</dbReference>
<dbReference type="GO" id="GO:0016567">
    <property type="term" value="P:protein ubiquitination"/>
    <property type="evidence" value="ECO:0000318"/>
    <property type="project" value="GO_Central"/>
</dbReference>
<dbReference type="GO" id="GO:0065003">
    <property type="term" value="P:protein-containing complex assembly"/>
    <property type="evidence" value="ECO:0000266"/>
    <property type="project" value="RGD"/>
</dbReference>
<dbReference type="GO" id="GO:0051726">
    <property type="term" value="P:regulation of cell cycle"/>
    <property type="evidence" value="ECO:0007669"/>
    <property type="project" value="InterPro"/>
</dbReference>
<dbReference type="GO" id="GO:0002027">
    <property type="term" value="P:regulation of heart rate"/>
    <property type="evidence" value="ECO:0000266"/>
    <property type="project" value="RGD"/>
</dbReference>
<dbReference type="GO" id="GO:0003281">
    <property type="term" value="P:ventricular septum development"/>
    <property type="evidence" value="ECO:0000266"/>
    <property type="project" value="RGD"/>
</dbReference>
<dbReference type="CDD" id="cd17673">
    <property type="entry name" value="MDM4"/>
    <property type="match status" value="1"/>
</dbReference>
<dbReference type="CDD" id="cd16784">
    <property type="entry name" value="mRING-HC-C2H2C4_MDM4"/>
    <property type="match status" value="1"/>
</dbReference>
<dbReference type="FunFam" id="1.10.245.10:FF:000002">
    <property type="entry name" value="E3 ubiquitin-protein ligase Mdm2"/>
    <property type="match status" value="1"/>
</dbReference>
<dbReference type="FunFam" id="2.30.30.380:FF:000010">
    <property type="entry name" value="MDM4 isoform 3"/>
    <property type="match status" value="1"/>
</dbReference>
<dbReference type="Gene3D" id="1.10.245.10">
    <property type="entry name" value="SWIB/MDM2 domain"/>
    <property type="match status" value="1"/>
</dbReference>
<dbReference type="Gene3D" id="3.30.40.10">
    <property type="entry name" value="Zinc/RING finger domain, C3HC4 (zinc finger)"/>
    <property type="match status" value="1"/>
</dbReference>
<dbReference type="Gene3D" id="2.30.30.380">
    <property type="entry name" value="Zn-finger domain of Sec23/24"/>
    <property type="match status" value="1"/>
</dbReference>
<dbReference type="InterPro" id="IPR015458">
    <property type="entry name" value="MDM4"/>
</dbReference>
<dbReference type="InterPro" id="IPR016495">
    <property type="entry name" value="p53_neg-reg_MDM_2/4"/>
</dbReference>
<dbReference type="InterPro" id="IPR036885">
    <property type="entry name" value="SWIB_MDM2_dom_sf"/>
</dbReference>
<dbReference type="InterPro" id="IPR003121">
    <property type="entry name" value="SWIB_MDM2_domain"/>
</dbReference>
<dbReference type="InterPro" id="IPR001876">
    <property type="entry name" value="Znf_RanBP2"/>
</dbReference>
<dbReference type="InterPro" id="IPR036443">
    <property type="entry name" value="Znf_RanBP2_sf"/>
</dbReference>
<dbReference type="InterPro" id="IPR001841">
    <property type="entry name" value="Znf_RING"/>
</dbReference>
<dbReference type="InterPro" id="IPR013083">
    <property type="entry name" value="Znf_RING/FYVE/PHD"/>
</dbReference>
<dbReference type="PANTHER" id="PTHR46858">
    <property type="entry name" value="OS05G0521000 PROTEIN"/>
    <property type="match status" value="1"/>
</dbReference>
<dbReference type="PANTHER" id="PTHR46858:SF12">
    <property type="entry name" value="PROTEIN MDM4"/>
    <property type="match status" value="1"/>
</dbReference>
<dbReference type="Pfam" id="PF13920">
    <property type="entry name" value="zf-C3HC4_3"/>
    <property type="match status" value="1"/>
</dbReference>
<dbReference type="Pfam" id="PF00641">
    <property type="entry name" value="Zn_ribbon_RanBP"/>
    <property type="match status" value="1"/>
</dbReference>
<dbReference type="PIRSF" id="PIRSF500699">
    <property type="entry name" value="MDM4"/>
    <property type="match status" value="1"/>
</dbReference>
<dbReference type="PIRSF" id="PIRSF006748">
    <property type="entry name" value="p53_MDM_2/4"/>
    <property type="match status" value="1"/>
</dbReference>
<dbReference type="SUPFAM" id="SSF90209">
    <property type="entry name" value="Ran binding protein zinc finger-like"/>
    <property type="match status" value="1"/>
</dbReference>
<dbReference type="SUPFAM" id="SSF47592">
    <property type="entry name" value="SWIB/MDM2 domain"/>
    <property type="match status" value="1"/>
</dbReference>
<dbReference type="PROSITE" id="PS51925">
    <property type="entry name" value="SWIB_MDM2"/>
    <property type="match status" value="1"/>
</dbReference>
<dbReference type="PROSITE" id="PS01358">
    <property type="entry name" value="ZF_RANBP2_1"/>
    <property type="match status" value="1"/>
</dbReference>
<dbReference type="PROSITE" id="PS50199">
    <property type="entry name" value="ZF_RANBP2_2"/>
    <property type="match status" value="1"/>
</dbReference>
<dbReference type="PROSITE" id="PS50089">
    <property type="entry name" value="ZF_RING_2"/>
    <property type="match status" value="1"/>
</dbReference>
<protein>
    <recommendedName>
        <fullName>Protein Mdm4</fullName>
    </recommendedName>
    <alternativeName>
        <fullName>Double minute 4 protein</fullName>
    </alternativeName>
    <alternativeName>
        <fullName>Mdm2-like p53-binding protein</fullName>
    </alternativeName>
    <alternativeName>
        <fullName>Protein Mdmx</fullName>
    </alternativeName>
    <alternativeName>
        <fullName>p53-binding protein Mdm4</fullName>
    </alternativeName>
</protein>
<proteinExistence type="evidence at protein level"/>
<organism>
    <name type="scientific">Rattus norvegicus</name>
    <name type="common">Rat</name>
    <dbReference type="NCBI Taxonomy" id="10116"/>
    <lineage>
        <taxon>Eukaryota</taxon>
        <taxon>Metazoa</taxon>
        <taxon>Chordata</taxon>
        <taxon>Craniata</taxon>
        <taxon>Vertebrata</taxon>
        <taxon>Euteleostomi</taxon>
        <taxon>Mammalia</taxon>
        <taxon>Eutheria</taxon>
        <taxon>Euarchontoglires</taxon>
        <taxon>Glires</taxon>
        <taxon>Rodentia</taxon>
        <taxon>Myomorpha</taxon>
        <taxon>Muroidea</taxon>
        <taxon>Muridae</taxon>
        <taxon>Murinae</taxon>
        <taxon>Rattus</taxon>
    </lineage>
</organism>
<gene>
    <name type="primary">Mdm4</name>
    <name type="synonym">Mdmx</name>
</gene>
<sequence>MTSHSTSAQCSASDSACRISSEQINQQVRPKLQLLKILQAAGAQGEVFTMKEVMHYLGQYIMVKQLYDQQEQHLVYCGGDLLGDLLGCQSFSVKDPSPLYDMLRKNLVTSASVNTDAAQTLALAQDHTMDIPSQDRLKHGATECSNPRKRTEEDDTHTLPTSRRKCRDSRADEDLIEHLSQDETSRLDLDFEEWDVAGLPWWFLGNLRNNYIPRSNGSTDLQTNQDIGTAIVSDTTDDLWFLNETVSEQLGVGVKVEAANCEQPSEVGRTRDKKMVEGGKDDDLEDSKSLSDDTDVEVTSEDEWQCTECKKFNSPSKRYCFRCWALRKDWYSDCSKLTHSLSTSNITAIPEKKDNEGIDVPDCRRTISAPVVRPKDGYLKEEKPRFDPCNSVEFLDLAHGSESQEIISSTREQTDIFSEQKTETESMEDFQNVLKPCSLCEKRPRDGNIIHGKTSHLTTCFHCARRLKKSGASCPACKKEIQLVIKVFIA</sequence>
<comment type="function">
    <text evidence="1">Inhibits p53/TP53- and TP73/p73-mediated cell cycle arrest and apoptosis by binding its transcriptional activation domain. Inhibits degradation of MDM2. Can reverse MDM2-targeted degradation of TP53 while maintaining suppression of TP53 transactivation and apoptotic functions (By similarity).</text>
</comment>
<comment type="subunit">
    <text evidence="1">Interacts with MDM2, TP53, TP73 and USP2. Found in a trimeric complex with USP2, MDM2 and MDM4. Interacts (phosphorylated) with YWHAG; negatively regulates MDM4 activity toward TP53 (By similarity).</text>
</comment>
<comment type="subcellular location">
    <subcellularLocation>
        <location evidence="1">Nucleus</location>
    </subcellularLocation>
</comment>
<comment type="PTM">
    <text evidence="1">Phosphorylated. Phosphorylation at Ser-368 promotes interaction with YWHAG and subsequent ubiquitination and degradation. Phosphorylation at Ser-342 also induces ubiquitination and degradation but to a lower extent (By similarity).</text>
</comment>
<comment type="PTM">
    <text evidence="1">Ubiquitinated and degraded by MDM2. Deubiquitination by USP2 on the other hand stabilizes the MDM4 protein (By similarity).</text>
</comment>
<comment type="similarity">
    <text evidence="8">Belongs to the MDM2/MDM4 family.</text>
</comment>